<comment type="function">
    <text evidence="1">Catalyzes the irreversible transfer of a propylamine group from the amino donor S-adenosylmethioninamine (decarboxy-AdoMet) to putrescine (1,4-diaminobutane) to yield spermidine.</text>
</comment>
<comment type="catalytic activity">
    <reaction evidence="1">
        <text>S-adenosyl 3-(methylsulfanyl)propylamine + putrescine = S-methyl-5'-thioadenosine + spermidine + H(+)</text>
        <dbReference type="Rhea" id="RHEA:12721"/>
        <dbReference type="ChEBI" id="CHEBI:15378"/>
        <dbReference type="ChEBI" id="CHEBI:17509"/>
        <dbReference type="ChEBI" id="CHEBI:57443"/>
        <dbReference type="ChEBI" id="CHEBI:57834"/>
        <dbReference type="ChEBI" id="CHEBI:326268"/>
        <dbReference type="EC" id="2.5.1.16"/>
    </reaction>
</comment>
<comment type="pathway">
    <text evidence="1">Amine and polyamine biosynthesis; spermidine biosynthesis; spermidine from putrescine: step 1/1.</text>
</comment>
<comment type="subunit">
    <text evidence="1">Homodimer or homotetramer.</text>
</comment>
<comment type="subcellular location">
    <subcellularLocation>
        <location evidence="1">Cytoplasm</location>
    </subcellularLocation>
</comment>
<comment type="similarity">
    <text evidence="1">Belongs to the spermidine/spermine synthase family.</text>
</comment>
<organism>
    <name type="scientific">Shigella dysenteriae serotype 1 (strain Sd197)</name>
    <dbReference type="NCBI Taxonomy" id="300267"/>
    <lineage>
        <taxon>Bacteria</taxon>
        <taxon>Pseudomonadati</taxon>
        <taxon>Pseudomonadota</taxon>
        <taxon>Gammaproteobacteria</taxon>
        <taxon>Enterobacterales</taxon>
        <taxon>Enterobacteriaceae</taxon>
        <taxon>Shigella</taxon>
    </lineage>
</organism>
<proteinExistence type="inferred from homology"/>
<reference key="1">
    <citation type="journal article" date="2005" name="Nucleic Acids Res.">
        <title>Genome dynamics and diversity of Shigella species, the etiologic agents of bacillary dysentery.</title>
        <authorList>
            <person name="Yang F."/>
            <person name="Yang J."/>
            <person name="Zhang X."/>
            <person name="Chen L."/>
            <person name="Jiang Y."/>
            <person name="Yan Y."/>
            <person name="Tang X."/>
            <person name="Wang J."/>
            <person name="Xiong Z."/>
            <person name="Dong J."/>
            <person name="Xue Y."/>
            <person name="Zhu Y."/>
            <person name="Xu X."/>
            <person name="Sun L."/>
            <person name="Chen S."/>
            <person name="Nie H."/>
            <person name="Peng J."/>
            <person name="Xu J."/>
            <person name="Wang Y."/>
            <person name="Yuan Z."/>
            <person name="Wen Y."/>
            <person name="Yao Z."/>
            <person name="Shen Y."/>
            <person name="Qiang B."/>
            <person name="Hou Y."/>
            <person name="Yu J."/>
            <person name="Jin Q."/>
        </authorList>
    </citation>
    <scope>NUCLEOTIDE SEQUENCE [LARGE SCALE GENOMIC DNA]</scope>
    <source>
        <strain>Sd197</strain>
    </source>
</reference>
<accession>Q32K90</accession>
<dbReference type="EC" id="2.5.1.16" evidence="1"/>
<dbReference type="EMBL" id="CP000034">
    <property type="protein sequence ID" value="ABB60268.1"/>
    <property type="molecule type" value="Genomic_DNA"/>
</dbReference>
<dbReference type="RefSeq" id="WP_000818403.1">
    <property type="nucleotide sequence ID" value="NC_007606.1"/>
</dbReference>
<dbReference type="RefSeq" id="YP_401756.1">
    <property type="nucleotide sequence ID" value="NC_007606.1"/>
</dbReference>
<dbReference type="SMR" id="Q32K90"/>
<dbReference type="STRING" id="300267.SDY_0028"/>
<dbReference type="EnsemblBacteria" id="ABB60268">
    <property type="protein sequence ID" value="ABB60268"/>
    <property type="gene ID" value="SDY_0028"/>
</dbReference>
<dbReference type="KEGG" id="sdy:SDY_0028"/>
<dbReference type="PATRIC" id="fig|300267.13.peg.30"/>
<dbReference type="HOGENOM" id="CLU_048199_0_0_6"/>
<dbReference type="UniPathway" id="UPA00248">
    <property type="reaction ID" value="UER00314"/>
</dbReference>
<dbReference type="Proteomes" id="UP000002716">
    <property type="component" value="Chromosome"/>
</dbReference>
<dbReference type="GO" id="GO:0005829">
    <property type="term" value="C:cytosol"/>
    <property type="evidence" value="ECO:0007669"/>
    <property type="project" value="TreeGrafter"/>
</dbReference>
<dbReference type="GO" id="GO:0004766">
    <property type="term" value="F:spermidine synthase activity"/>
    <property type="evidence" value="ECO:0007669"/>
    <property type="project" value="UniProtKB-UniRule"/>
</dbReference>
<dbReference type="GO" id="GO:0008295">
    <property type="term" value="P:spermidine biosynthetic process"/>
    <property type="evidence" value="ECO:0007669"/>
    <property type="project" value="UniProtKB-UniRule"/>
</dbReference>
<dbReference type="CDD" id="cd02440">
    <property type="entry name" value="AdoMet_MTases"/>
    <property type="match status" value="1"/>
</dbReference>
<dbReference type="FunFam" id="2.30.140.10:FF:000002">
    <property type="entry name" value="Polyamine aminopropyltransferase"/>
    <property type="match status" value="1"/>
</dbReference>
<dbReference type="FunFam" id="3.40.50.150:FF:000026">
    <property type="entry name" value="Polyamine aminopropyltransferase"/>
    <property type="match status" value="1"/>
</dbReference>
<dbReference type="Gene3D" id="2.30.140.10">
    <property type="entry name" value="Spermidine synthase, tetramerisation domain"/>
    <property type="match status" value="1"/>
</dbReference>
<dbReference type="Gene3D" id="3.40.50.150">
    <property type="entry name" value="Vaccinia Virus protein VP39"/>
    <property type="match status" value="1"/>
</dbReference>
<dbReference type="HAMAP" id="MF_00198">
    <property type="entry name" value="Spermidine_synth"/>
    <property type="match status" value="1"/>
</dbReference>
<dbReference type="InterPro" id="IPR030374">
    <property type="entry name" value="PABS"/>
</dbReference>
<dbReference type="InterPro" id="IPR030373">
    <property type="entry name" value="PABS_CS"/>
</dbReference>
<dbReference type="InterPro" id="IPR029063">
    <property type="entry name" value="SAM-dependent_MTases_sf"/>
</dbReference>
<dbReference type="InterPro" id="IPR001045">
    <property type="entry name" value="Spermi_synthase"/>
</dbReference>
<dbReference type="InterPro" id="IPR035246">
    <property type="entry name" value="Spermidine_synt_N"/>
</dbReference>
<dbReference type="InterPro" id="IPR037163">
    <property type="entry name" value="Spermidine_synt_N_sf"/>
</dbReference>
<dbReference type="NCBIfam" id="NF037959">
    <property type="entry name" value="MFS_SpdSyn"/>
    <property type="match status" value="1"/>
</dbReference>
<dbReference type="NCBIfam" id="NF002010">
    <property type="entry name" value="PRK00811.1"/>
    <property type="match status" value="1"/>
</dbReference>
<dbReference type="NCBIfam" id="TIGR00417">
    <property type="entry name" value="speE"/>
    <property type="match status" value="1"/>
</dbReference>
<dbReference type="PANTHER" id="PTHR11558:SF11">
    <property type="entry name" value="SPERMIDINE SYNTHASE"/>
    <property type="match status" value="1"/>
</dbReference>
<dbReference type="PANTHER" id="PTHR11558">
    <property type="entry name" value="SPERMIDINE/SPERMINE SYNTHASE"/>
    <property type="match status" value="1"/>
</dbReference>
<dbReference type="Pfam" id="PF17284">
    <property type="entry name" value="Spermine_synt_N"/>
    <property type="match status" value="1"/>
</dbReference>
<dbReference type="Pfam" id="PF01564">
    <property type="entry name" value="Spermine_synth"/>
    <property type="match status" value="1"/>
</dbReference>
<dbReference type="SUPFAM" id="SSF53335">
    <property type="entry name" value="S-adenosyl-L-methionine-dependent methyltransferases"/>
    <property type="match status" value="1"/>
</dbReference>
<dbReference type="PROSITE" id="PS01330">
    <property type="entry name" value="PABS_1"/>
    <property type="match status" value="1"/>
</dbReference>
<dbReference type="PROSITE" id="PS51006">
    <property type="entry name" value="PABS_2"/>
    <property type="match status" value="1"/>
</dbReference>
<protein>
    <recommendedName>
        <fullName evidence="1">Polyamine aminopropyltransferase</fullName>
    </recommendedName>
    <alternativeName>
        <fullName evidence="1">Putrescine aminopropyltransferase</fullName>
        <shortName evidence="1">PAPT</shortName>
    </alternativeName>
    <alternativeName>
        <fullName evidence="1">Spermidine synthase</fullName>
        <shortName evidence="1">SPDS</shortName>
        <shortName evidence="1">SPDSY</shortName>
        <ecNumber evidence="1">2.5.1.16</ecNumber>
    </alternativeName>
</protein>
<gene>
    <name evidence="1" type="primary">speE</name>
    <name type="ordered locus">SDY_0028</name>
</gene>
<evidence type="ECO:0000255" key="1">
    <source>
        <dbReference type="HAMAP-Rule" id="MF_00198"/>
    </source>
</evidence>
<name>SPEE_SHIDS</name>
<feature type="chain" id="PRO_1000012018" description="Polyamine aminopropyltransferase">
    <location>
        <begin position="1"/>
        <end position="288"/>
    </location>
</feature>
<feature type="domain" description="PABS" evidence="1">
    <location>
        <begin position="9"/>
        <end position="238"/>
    </location>
</feature>
<feature type="active site" description="Proton acceptor" evidence="1">
    <location>
        <position position="158"/>
    </location>
</feature>
<feature type="binding site" evidence="1">
    <location>
        <position position="33"/>
    </location>
    <ligand>
        <name>S-methyl-5'-thioadenosine</name>
        <dbReference type="ChEBI" id="CHEBI:17509"/>
    </ligand>
</feature>
<feature type="binding site" evidence="1">
    <location>
        <position position="64"/>
    </location>
    <ligand>
        <name>spermidine</name>
        <dbReference type="ChEBI" id="CHEBI:57834"/>
    </ligand>
</feature>
<feature type="binding site" evidence="1">
    <location>
        <position position="88"/>
    </location>
    <ligand>
        <name>spermidine</name>
        <dbReference type="ChEBI" id="CHEBI:57834"/>
    </ligand>
</feature>
<feature type="binding site" evidence="1">
    <location>
        <position position="108"/>
    </location>
    <ligand>
        <name>S-methyl-5'-thioadenosine</name>
        <dbReference type="ChEBI" id="CHEBI:17509"/>
    </ligand>
</feature>
<feature type="binding site" evidence="1">
    <location>
        <begin position="140"/>
        <end position="141"/>
    </location>
    <ligand>
        <name>S-methyl-5'-thioadenosine</name>
        <dbReference type="ChEBI" id="CHEBI:17509"/>
    </ligand>
</feature>
<feature type="binding site" evidence="1">
    <location>
        <begin position="158"/>
        <end position="161"/>
    </location>
    <ligand>
        <name>spermidine</name>
        <dbReference type="ChEBI" id="CHEBI:57834"/>
    </ligand>
</feature>
<feature type="binding site" evidence="1">
    <location>
        <position position="165"/>
    </location>
    <ligand>
        <name>S-methyl-5'-thioadenosine</name>
        <dbReference type="ChEBI" id="CHEBI:17509"/>
    </ligand>
</feature>
<keyword id="KW-0963">Cytoplasm</keyword>
<keyword id="KW-0620">Polyamine biosynthesis</keyword>
<keyword id="KW-1185">Reference proteome</keyword>
<keyword id="KW-0745">Spermidine biosynthesis</keyword>
<keyword id="KW-0808">Transferase</keyword>
<sequence>MAEKKQWHETLHDQFGQYFAVDNVLYHEKTDHQDLIIFENAAFGRVMALDGVVQTTERDEFIYHEMMTHVPLLAHGHAKHVLIIGGGDGAMLREVTRHKNVESITMVEIDAGVVSFCRQYLPNHNAGSYDDLRFKLVIDDGVNFVNQTSQTFDVIISDCTDPIGPGESLFTSAFYEGCKRCLNPGGIFVAQNGVCFLQQEEAIDSHRKLSHYFSDVGFYQAAIPTYYGGIMTFAWATDNDALRHLSTEIIQARFLASGLKCRYYNPAVHTAAFALPQYLQDALAPQPS</sequence>